<protein>
    <recommendedName>
        <fullName>Homeobox protein Hox-A4</fullName>
    </recommendedName>
</protein>
<keyword id="KW-0217">Developmental protein</keyword>
<keyword id="KW-0238">DNA-binding</keyword>
<keyword id="KW-0371">Homeobox</keyword>
<keyword id="KW-0539">Nucleus</keyword>
<keyword id="KW-0804">Transcription</keyword>
<keyword id="KW-0805">Transcription regulation</keyword>
<reference key="1">
    <citation type="journal article" date="2000" name="Proc. Natl. Acad. Sci. U.S.A.">
        <title>Hox cluster genomics in the horn shark, Heterodontus francisci.</title>
        <authorList>
            <person name="Kim C.B."/>
            <person name="Amemiya C."/>
            <person name="Bailey W."/>
            <person name="Kawasaki K."/>
            <person name="Mezey J."/>
            <person name="Miller W."/>
            <person name="Minoshima S."/>
            <person name="Shimizu N."/>
            <person name="Wagner G."/>
            <person name="Ruddle F."/>
        </authorList>
    </citation>
    <scope>NUCLEOTIDE SEQUENCE [GENOMIC DNA]</scope>
</reference>
<dbReference type="EMBL" id="AF224262">
    <property type="protein sequence ID" value="AAF44642.1"/>
    <property type="molecule type" value="Genomic_DNA"/>
</dbReference>
<dbReference type="SMR" id="Q9IA22"/>
<dbReference type="GO" id="GO:0005654">
    <property type="term" value="C:nucleoplasm"/>
    <property type="evidence" value="ECO:0007669"/>
    <property type="project" value="TreeGrafter"/>
</dbReference>
<dbReference type="GO" id="GO:0000981">
    <property type="term" value="F:DNA-binding transcription factor activity, RNA polymerase II-specific"/>
    <property type="evidence" value="ECO:0007669"/>
    <property type="project" value="InterPro"/>
</dbReference>
<dbReference type="GO" id="GO:0000978">
    <property type="term" value="F:RNA polymerase II cis-regulatory region sequence-specific DNA binding"/>
    <property type="evidence" value="ECO:0007669"/>
    <property type="project" value="TreeGrafter"/>
</dbReference>
<dbReference type="GO" id="GO:0009952">
    <property type="term" value="P:anterior/posterior pattern specification"/>
    <property type="evidence" value="ECO:0007669"/>
    <property type="project" value="TreeGrafter"/>
</dbReference>
<dbReference type="GO" id="GO:0048704">
    <property type="term" value="P:embryonic skeletal system morphogenesis"/>
    <property type="evidence" value="ECO:0007669"/>
    <property type="project" value="TreeGrafter"/>
</dbReference>
<dbReference type="GO" id="GO:0045944">
    <property type="term" value="P:positive regulation of transcription by RNA polymerase II"/>
    <property type="evidence" value="ECO:0007669"/>
    <property type="project" value="TreeGrafter"/>
</dbReference>
<dbReference type="CDD" id="cd00086">
    <property type="entry name" value="homeodomain"/>
    <property type="match status" value="1"/>
</dbReference>
<dbReference type="FunFam" id="1.10.10.60:FF:000029">
    <property type="entry name" value="Homeobox protein Hox-D4"/>
    <property type="match status" value="1"/>
</dbReference>
<dbReference type="Gene3D" id="1.10.10.60">
    <property type="entry name" value="Homeodomain-like"/>
    <property type="match status" value="1"/>
</dbReference>
<dbReference type="InterPro" id="IPR050609">
    <property type="entry name" value="Antp_homeobox_Deformed_sf"/>
</dbReference>
<dbReference type="InterPro" id="IPR001356">
    <property type="entry name" value="HD"/>
</dbReference>
<dbReference type="InterPro" id="IPR020479">
    <property type="entry name" value="HD_metazoa"/>
</dbReference>
<dbReference type="InterPro" id="IPR017995">
    <property type="entry name" value="Homeobox_antennapedia"/>
</dbReference>
<dbReference type="InterPro" id="IPR001827">
    <property type="entry name" value="Homeobox_Antennapedia_CS"/>
</dbReference>
<dbReference type="InterPro" id="IPR017970">
    <property type="entry name" value="Homeobox_CS"/>
</dbReference>
<dbReference type="InterPro" id="IPR009057">
    <property type="entry name" value="Homeodomain-like_sf"/>
</dbReference>
<dbReference type="PANTHER" id="PTHR45771:SF2">
    <property type="entry name" value="HOMEOBOX PROTEIN HOX-A4"/>
    <property type="match status" value="1"/>
</dbReference>
<dbReference type="PANTHER" id="PTHR45771">
    <property type="entry name" value="HOMEOTIC PROTEIN DEFORMED"/>
    <property type="match status" value="1"/>
</dbReference>
<dbReference type="Pfam" id="PF00046">
    <property type="entry name" value="Homeodomain"/>
    <property type="match status" value="1"/>
</dbReference>
<dbReference type="PRINTS" id="PR00025">
    <property type="entry name" value="ANTENNAPEDIA"/>
</dbReference>
<dbReference type="PRINTS" id="PR00024">
    <property type="entry name" value="HOMEOBOX"/>
</dbReference>
<dbReference type="SMART" id="SM00389">
    <property type="entry name" value="HOX"/>
    <property type="match status" value="1"/>
</dbReference>
<dbReference type="SUPFAM" id="SSF46689">
    <property type="entry name" value="Homeodomain-like"/>
    <property type="match status" value="1"/>
</dbReference>
<dbReference type="PROSITE" id="PS00032">
    <property type="entry name" value="ANTENNAPEDIA"/>
    <property type="match status" value="1"/>
</dbReference>
<dbReference type="PROSITE" id="PS00027">
    <property type="entry name" value="HOMEOBOX_1"/>
    <property type="match status" value="1"/>
</dbReference>
<dbReference type="PROSITE" id="PS50071">
    <property type="entry name" value="HOMEOBOX_2"/>
    <property type="match status" value="1"/>
</dbReference>
<organism>
    <name type="scientific">Heterodontus francisci</name>
    <name type="common">Horn shark</name>
    <name type="synonym">Cestracion francisci</name>
    <dbReference type="NCBI Taxonomy" id="7792"/>
    <lineage>
        <taxon>Eukaryota</taxon>
        <taxon>Metazoa</taxon>
        <taxon>Chordata</taxon>
        <taxon>Craniata</taxon>
        <taxon>Vertebrata</taxon>
        <taxon>Chondrichthyes</taxon>
        <taxon>Elasmobranchii</taxon>
        <taxon>Galeomorphii</taxon>
        <taxon>Heterodontoidea</taxon>
        <taxon>Heterodontiformes</taxon>
        <taxon>Heterodontidae</taxon>
        <taxon>Heterodontus</taxon>
    </lineage>
</organism>
<accession>Q9IA22</accession>
<evidence type="ECO:0000250" key="1"/>
<evidence type="ECO:0000255" key="2">
    <source>
        <dbReference type="PROSITE-ProRule" id="PRU00108"/>
    </source>
</evidence>
<evidence type="ECO:0000256" key="3">
    <source>
        <dbReference type="SAM" id="MobiDB-lite"/>
    </source>
</evidence>
<evidence type="ECO:0000305" key="4"/>
<name>HXA4_HETFR</name>
<sequence length="247" mass="28408">MTMSSFLINSNYVEPKFPPCEEYSQNNYIPSQSPEYYERPRDPGFHHEALYPQSNYPEPTYSFNNVQGTGNQDMSQRGHVQSQASLQNHIPRQNQLCEVVPVATPALCSQNAKNPTAQKGTLSKEPIVYPWMKKIHVTTVNPNYTGGEPKRSRTAYTRQQVLELEKEFHFNRYLTRRRRIEIAHTLCLSERQVKIWFQNRRMKWKKDHKLPNTKMRSASSSSSTSQQTQVSSQGPQPDGSAPNSSSL</sequence>
<feature type="chain" id="PRO_0000200054" description="Homeobox protein Hox-A4">
    <location>
        <begin position="1"/>
        <end position="247"/>
    </location>
</feature>
<feature type="DNA-binding region" description="Homeobox" evidence="2">
    <location>
        <begin position="149"/>
        <end position="208"/>
    </location>
</feature>
<feature type="region of interest" description="Disordered" evidence="3">
    <location>
        <begin position="206"/>
        <end position="247"/>
    </location>
</feature>
<feature type="short sequence motif" description="Antp-type hexapeptide">
    <location>
        <begin position="128"/>
        <end position="133"/>
    </location>
</feature>
<feature type="compositionally biased region" description="Low complexity" evidence="3">
    <location>
        <begin position="217"/>
        <end position="233"/>
    </location>
</feature>
<gene>
    <name type="primary">HOXA4</name>
</gene>
<comment type="function">
    <text evidence="1">Sequence-specific transcription factor which is part of a developmental regulatory system that provides cells with specific positional identities on the anterior-posterior axis.</text>
</comment>
<comment type="subcellular location">
    <subcellularLocation>
        <location evidence="2">Nucleus</location>
    </subcellularLocation>
</comment>
<comment type="similarity">
    <text evidence="4">Belongs to the Antp homeobox family. Deformed subfamily.</text>
</comment>
<proteinExistence type="inferred from homology"/>